<evidence type="ECO:0000250" key="1">
    <source>
        <dbReference type="UniProtKB" id="O49482"/>
    </source>
</evidence>
<evidence type="ECO:0000269" key="2">
    <source>
    </source>
</evidence>
<evidence type="ECO:0000269" key="3">
    <source>
    </source>
</evidence>
<evidence type="ECO:0000269" key="4">
    <source>
    </source>
</evidence>
<evidence type="ECO:0000303" key="5">
    <source>
    </source>
</evidence>
<evidence type="ECO:0000303" key="6">
    <source>
    </source>
</evidence>
<evidence type="ECO:0000305" key="7"/>
<keyword id="KW-0438">Lignin biosynthesis</keyword>
<keyword id="KW-0479">Metal-binding</keyword>
<keyword id="KW-0521">NADP</keyword>
<keyword id="KW-0560">Oxidoreductase</keyword>
<keyword id="KW-1185">Reference proteome</keyword>
<keyword id="KW-0862">Zinc</keyword>
<proteinExistence type="evidence at protein level"/>
<protein>
    <recommendedName>
        <fullName evidence="7">Cinnamyl alcohol dehydrogenase 2</fullName>
        <shortName evidence="5">OsCAD2</shortName>
        <ecNumber evidence="3">1.1.1.195</ecNumber>
    </recommendedName>
    <alternativeName>
        <fullName evidence="6">Protein GOLD HULL AND INTERNODE 2</fullName>
    </alternativeName>
</protein>
<reference key="1">
    <citation type="journal article" date="2005" name="Nature">
        <title>The map-based sequence of the rice genome.</title>
        <authorList>
            <consortium name="International rice genome sequencing project (IRGSP)"/>
        </authorList>
    </citation>
    <scope>NUCLEOTIDE SEQUENCE [LARGE SCALE GENOMIC DNA]</scope>
    <source>
        <strain>cv. Nipponbare</strain>
    </source>
</reference>
<reference key="2">
    <citation type="journal article" date="2008" name="Nucleic Acids Res.">
        <title>The rice annotation project database (RAP-DB): 2008 update.</title>
        <authorList>
            <consortium name="The rice annotation project (RAP)"/>
        </authorList>
    </citation>
    <scope>GENOME REANNOTATION</scope>
    <source>
        <strain>cv. Nipponbare</strain>
    </source>
</reference>
<reference key="3">
    <citation type="journal article" date="2013" name="Rice">
        <title>Improvement of the Oryza sativa Nipponbare reference genome using next generation sequence and optical map data.</title>
        <authorList>
            <person name="Kawahara Y."/>
            <person name="de la Bastide M."/>
            <person name="Hamilton J.P."/>
            <person name="Kanamori H."/>
            <person name="McCombie W.R."/>
            <person name="Ouyang S."/>
            <person name="Schwartz D.C."/>
            <person name="Tanaka T."/>
            <person name="Wu J."/>
            <person name="Zhou S."/>
            <person name="Childs K.L."/>
            <person name="Davidson R.M."/>
            <person name="Lin H."/>
            <person name="Quesada-Ocampo L."/>
            <person name="Vaillancourt B."/>
            <person name="Sakai H."/>
            <person name="Lee S.S."/>
            <person name="Kim J."/>
            <person name="Numa H."/>
            <person name="Itoh T."/>
            <person name="Buell C.R."/>
            <person name="Matsumoto T."/>
        </authorList>
    </citation>
    <scope>GENOME REANNOTATION</scope>
    <source>
        <strain>cv. Nipponbare</strain>
    </source>
</reference>
<reference key="4">
    <citation type="journal article" date="2003" name="Science">
        <title>Collection, mapping, and annotation of over 28,000 cDNA clones from japonica rice.</title>
        <authorList>
            <consortium name="The rice full-length cDNA consortium"/>
        </authorList>
    </citation>
    <scope>NUCLEOTIDE SEQUENCE [LARGE SCALE MRNA]</scope>
    <source>
        <strain>cv. Nipponbare</strain>
    </source>
</reference>
<reference key="5">
    <citation type="submission" date="2003-10" db="EMBL/GenBank/DDBJ databases">
        <title>The cDNA encoding cinnamyl alcohol dehydrogenase in rice stem.</title>
        <authorList>
            <person name="Mase K."/>
            <person name="Nishikubo N."/>
            <person name="Satou K."/>
            <person name="Nakano Y."/>
            <person name="Kajita S."/>
            <person name="Katayama Y."/>
        </authorList>
    </citation>
    <scope>NUCLEOTIDE SEQUENCE [MRNA] OF 206-363</scope>
    <source>
        <strain>cv. Fujiminori</strain>
    </source>
</reference>
<reference key="6">
    <citation type="journal article" date="2005" name="Planta">
        <title>Structure of the cinnamyl-alcohol dehydrogenase gene family in rice and promoter activity of a member associated with lignification.</title>
        <authorList>
            <person name="Tobias C.M."/>
            <person name="Chow E.K."/>
        </authorList>
    </citation>
    <scope>IDENTIFICATION</scope>
    <scope>TISSUE SPECIFICITY</scope>
    <scope>GENE FAMILY</scope>
    <scope>NOMENCLATURE</scope>
</reference>
<reference key="7">
    <citation type="journal article" date="2006" name="Plant Physiol.">
        <title>GOLD HULL AND INTERNODE2 encodes a primarily multifunctional cinnamyl-alcohol dehydrogenase in rice.</title>
        <authorList>
            <person name="Zhang K."/>
            <person name="Qian Q."/>
            <person name="Huang Z."/>
            <person name="Wang Y."/>
            <person name="Li M."/>
            <person name="Hong L."/>
            <person name="Zeng D."/>
            <person name="Gu M."/>
            <person name="Chu C."/>
            <person name="Cheng Z."/>
        </authorList>
    </citation>
    <scope>FUNCTION</scope>
    <scope>CATALYTIC ACTIVITY</scope>
    <scope>BIOPHYSICOCHEMICAL PROPERTIES</scope>
    <scope>TISSUE SPECIFICITY</scope>
    <scope>DISRUPTION PHENOTYPE</scope>
    <scope>MUTAGENESIS OF GLY-185</scope>
    <scope>PATHWAY</scope>
</reference>
<reference key="8">
    <citation type="journal article" date="2012" name="Plant Cell Rep.">
        <title>OsCAD2 is the major CAD gene responsible for monolignol biosynthesis in rice culm.</title>
        <authorList>
            <person name="Hirano K."/>
            <person name="Aya K."/>
            <person name="Kondo M."/>
            <person name="Okuno A."/>
            <person name="Morinaka Y."/>
            <person name="Matsuoka M."/>
        </authorList>
    </citation>
    <scope>FUNCTION</scope>
    <scope>TISSUE SPECIFICITY</scope>
</reference>
<organism>
    <name type="scientific">Oryza sativa subsp. japonica</name>
    <name type="common">Rice</name>
    <dbReference type="NCBI Taxonomy" id="39947"/>
    <lineage>
        <taxon>Eukaryota</taxon>
        <taxon>Viridiplantae</taxon>
        <taxon>Streptophyta</taxon>
        <taxon>Embryophyta</taxon>
        <taxon>Tracheophyta</taxon>
        <taxon>Spermatophyta</taxon>
        <taxon>Magnoliopsida</taxon>
        <taxon>Liliopsida</taxon>
        <taxon>Poales</taxon>
        <taxon>Poaceae</taxon>
        <taxon>BOP clade</taxon>
        <taxon>Oryzoideae</taxon>
        <taxon>Oryzeae</taxon>
        <taxon>Oryzinae</taxon>
        <taxon>Oryza</taxon>
        <taxon>Oryza sativa</taxon>
    </lineage>
</organism>
<name>CADH2_ORYSJ</name>
<feature type="chain" id="PRO_0000382641" description="Cinnamyl alcohol dehydrogenase 2">
    <location>
        <begin position="1"/>
        <end position="363"/>
    </location>
</feature>
<feature type="binding site" evidence="1">
    <location>
        <position position="47"/>
    </location>
    <ligand>
        <name>Zn(2+)</name>
        <dbReference type="ChEBI" id="CHEBI:29105"/>
        <label>1</label>
        <note>catalytic</note>
    </ligand>
</feature>
<feature type="binding site" evidence="1">
    <location>
        <position position="49"/>
    </location>
    <ligand>
        <name>NADP(+)</name>
        <dbReference type="ChEBI" id="CHEBI:58349"/>
    </ligand>
</feature>
<feature type="binding site" evidence="1">
    <location>
        <position position="69"/>
    </location>
    <ligand>
        <name>Zn(2+)</name>
        <dbReference type="ChEBI" id="CHEBI:29105"/>
        <label>1</label>
        <note>catalytic</note>
    </ligand>
</feature>
<feature type="binding site" evidence="1">
    <location>
        <position position="70"/>
    </location>
    <ligand>
        <name>Zn(2+)</name>
        <dbReference type="ChEBI" id="CHEBI:29105"/>
        <label>1</label>
        <note>catalytic</note>
    </ligand>
</feature>
<feature type="binding site" evidence="1">
    <location>
        <position position="100"/>
    </location>
    <ligand>
        <name>Zn(2+)</name>
        <dbReference type="ChEBI" id="CHEBI:29105"/>
        <label>2</label>
    </ligand>
</feature>
<feature type="binding site" evidence="1">
    <location>
        <position position="103"/>
    </location>
    <ligand>
        <name>Zn(2+)</name>
        <dbReference type="ChEBI" id="CHEBI:29105"/>
        <label>2</label>
    </ligand>
</feature>
<feature type="binding site" evidence="1">
    <location>
        <position position="106"/>
    </location>
    <ligand>
        <name>Zn(2+)</name>
        <dbReference type="ChEBI" id="CHEBI:29105"/>
        <label>2</label>
    </ligand>
</feature>
<feature type="binding site" evidence="1">
    <location>
        <position position="114"/>
    </location>
    <ligand>
        <name>Zn(2+)</name>
        <dbReference type="ChEBI" id="CHEBI:29105"/>
        <label>2</label>
    </ligand>
</feature>
<feature type="binding site" evidence="1">
    <location>
        <position position="163"/>
    </location>
    <ligand>
        <name>Zn(2+)</name>
        <dbReference type="ChEBI" id="CHEBI:29105"/>
        <label>1</label>
        <note>catalytic</note>
    </ligand>
</feature>
<feature type="binding site" evidence="1">
    <location>
        <position position="167"/>
    </location>
    <ligand>
        <name>NADP(+)</name>
        <dbReference type="ChEBI" id="CHEBI:58349"/>
    </ligand>
</feature>
<feature type="binding site" evidence="1">
    <location>
        <begin position="188"/>
        <end position="193"/>
    </location>
    <ligand>
        <name>NADP(+)</name>
        <dbReference type="ChEBI" id="CHEBI:58349"/>
    </ligand>
</feature>
<feature type="binding site" evidence="1">
    <location>
        <begin position="211"/>
        <end position="216"/>
    </location>
    <ligand>
        <name>NADP(+)</name>
        <dbReference type="ChEBI" id="CHEBI:58349"/>
    </ligand>
</feature>
<feature type="binding site" evidence="1">
    <location>
        <position position="251"/>
    </location>
    <ligand>
        <name>NADP(+)</name>
        <dbReference type="ChEBI" id="CHEBI:58349"/>
    </ligand>
</feature>
<feature type="binding site" evidence="1">
    <location>
        <position position="275"/>
    </location>
    <ligand>
        <name>NADP(+)</name>
        <dbReference type="ChEBI" id="CHEBI:58349"/>
    </ligand>
</feature>
<feature type="binding site" evidence="1">
    <location>
        <begin position="298"/>
        <end position="300"/>
    </location>
    <ligand>
        <name>NADP(+)</name>
        <dbReference type="ChEBI" id="CHEBI:58349"/>
    </ligand>
</feature>
<feature type="mutagenesis site" description="Loss of activity." evidence="3">
    <original>G</original>
    <variation>D</variation>
    <location>
        <position position="185"/>
    </location>
</feature>
<feature type="sequence conflict" description="In Ref. 4; AK105011." evidence="7" ref="4">
    <original>K</original>
    <variation>E</variation>
    <location>
        <position position="293"/>
    </location>
</feature>
<sequence>MGSLAAEKTVTGWAARDASGHLTPYNYTLRKTGPEDVVVKVLYCGICHTDIHQAKNHLGASKYPMVPGHEVVGEVVEVGPEVTKYSAGDVVGVGVIVGCCRECHPCKANVEQYCNKRIWSYNDVYTDGRPTQGGFASAMVVDQKFVVKIPAGLAPEQAAPLLCAGLTVYSPLKHFGLMSPGLRGGVLGLGGVGHMGVKVAKSMGHHVTVISSSARKRGEAMDDLGADAYLVSSDAAAMAAAGDSLDYIIDTVPVHHPLEPYLALLKLDGKLILMGVINQPLSFISPMVMLGRKAITGSFIGSMAETEEVLNFCVDKGLTSQIEVVKMDYVNQALERLERNDVRYRFVVDVAGSNIDDADAPPA</sequence>
<dbReference type="EC" id="1.1.1.195" evidence="3"/>
<dbReference type="EMBL" id="AP003990">
    <property type="protein sequence ID" value="BAD15428.1"/>
    <property type="molecule type" value="Genomic_DNA"/>
</dbReference>
<dbReference type="EMBL" id="AP004046">
    <property type="protein sequence ID" value="BAD15519.1"/>
    <property type="molecule type" value="Genomic_DNA"/>
</dbReference>
<dbReference type="EMBL" id="AP008208">
    <property type="protein sequence ID" value="BAF08046.1"/>
    <property type="molecule type" value="Genomic_DNA"/>
</dbReference>
<dbReference type="EMBL" id="AP014958">
    <property type="protein sequence ID" value="BAS77369.1"/>
    <property type="molecule type" value="Genomic_DNA"/>
</dbReference>
<dbReference type="EMBL" id="AK105011">
    <property type="status" value="NOT_ANNOTATED_CDS"/>
    <property type="molecule type" value="mRNA"/>
</dbReference>
<dbReference type="EMBL" id="AB122054">
    <property type="protein sequence ID" value="BAD14921.1"/>
    <property type="molecule type" value="mRNA"/>
</dbReference>
<dbReference type="EMBL" id="BK003969">
    <property type="protein sequence ID" value="DAA02237.1"/>
    <property type="molecule type" value="Genomic_DNA"/>
</dbReference>
<dbReference type="RefSeq" id="XP_015626408.1">
    <property type="nucleotide sequence ID" value="XM_015770922.1"/>
</dbReference>
<dbReference type="SMR" id="Q6ZHS4"/>
<dbReference type="FunCoup" id="Q6ZHS4">
    <property type="interactions" value="627"/>
</dbReference>
<dbReference type="STRING" id="39947.Q6ZHS4"/>
<dbReference type="PaxDb" id="39947-Q6ZHS4"/>
<dbReference type="EnsemblPlants" id="Os02t0187800-01">
    <property type="protein sequence ID" value="Os02t0187800-01"/>
    <property type="gene ID" value="Os02g0187800"/>
</dbReference>
<dbReference type="Gramene" id="Os02t0187800-01">
    <property type="protein sequence ID" value="Os02t0187800-01"/>
    <property type="gene ID" value="Os02g0187800"/>
</dbReference>
<dbReference type="KEGG" id="dosa:Os02g0187800"/>
<dbReference type="eggNOG" id="KOG0023">
    <property type="taxonomic scope" value="Eukaryota"/>
</dbReference>
<dbReference type="InParanoid" id="Q6ZHS4"/>
<dbReference type="OMA" id="FARNEHK"/>
<dbReference type="OrthoDB" id="1879366at2759"/>
<dbReference type="BRENDA" id="1.1.1.195">
    <property type="organism ID" value="8948"/>
</dbReference>
<dbReference type="PlantReactome" id="R-OSA-1119316">
    <property type="pathway name" value="Phenylpropanoid biosynthesis"/>
</dbReference>
<dbReference type="SABIO-RK" id="Q6ZHS4"/>
<dbReference type="UniPathway" id="UPA00711"/>
<dbReference type="Proteomes" id="UP000000763">
    <property type="component" value="Chromosome 2"/>
</dbReference>
<dbReference type="Proteomes" id="UP000059680">
    <property type="component" value="Chromosome 2"/>
</dbReference>
<dbReference type="ExpressionAtlas" id="Q6ZHS4">
    <property type="expression patterns" value="baseline and differential"/>
</dbReference>
<dbReference type="GO" id="GO:0045551">
    <property type="term" value="F:cinnamyl-alcohol dehydrogenase activity"/>
    <property type="evidence" value="ECO:0000314"/>
    <property type="project" value="Gramene"/>
</dbReference>
<dbReference type="GO" id="GO:0050268">
    <property type="term" value="F:coniferyl-alcohol dehydrogenase activity"/>
    <property type="evidence" value="ECO:0007669"/>
    <property type="project" value="RHEA"/>
</dbReference>
<dbReference type="GO" id="GO:0008270">
    <property type="term" value="F:zinc ion binding"/>
    <property type="evidence" value="ECO:0007669"/>
    <property type="project" value="InterPro"/>
</dbReference>
<dbReference type="GO" id="GO:0009809">
    <property type="term" value="P:lignin biosynthetic process"/>
    <property type="evidence" value="ECO:0000314"/>
    <property type="project" value="Gramene"/>
</dbReference>
<dbReference type="CDD" id="cd05283">
    <property type="entry name" value="CAD1"/>
    <property type="match status" value="1"/>
</dbReference>
<dbReference type="FunFam" id="3.40.50.720:FF:000022">
    <property type="entry name" value="Cinnamyl alcohol dehydrogenase"/>
    <property type="match status" value="1"/>
</dbReference>
<dbReference type="FunFam" id="3.90.180.10:FF:000004">
    <property type="entry name" value="probable cinnamyl alcohol dehydrogenase"/>
    <property type="match status" value="1"/>
</dbReference>
<dbReference type="FunFam" id="3.90.180.10:FF:000100">
    <property type="entry name" value="Putative cinnamyl alcohol dehydrogenase 6"/>
    <property type="match status" value="1"/>
</dbReference>
<dbReference type="Gene3D" id="3.90.180.10">
    <property type="entry name" value="Medium-chain alcohol dehydrogenases, catalytic domain"/>
    <property type="match status" value="1"/>
</dbReference>
<dbReference type="Gene3D" id="3.40.50.720">
    <property type="entry name" value="NAD(P)-binding Rossmann-like Domain"/>
    <property type="match status" value="1"/>
</dbReference>
<dbReference type="InterPro" id="IPR013149">
    <property type="entry name" value="ADH-like_C"/>
</dbReference>
<dbReference type="InterPro" id="IPR013154">
    <property type="entry name" value="ADH-like_N"/>
</dbReference>
<dbReference type="InterPro" id="IPR002328">
    <property type="entry name" value="ADH_Zn_CS"/>
</dbReference>
<dbReference type="InterPro" id="IPR047109">
    <property type="entry name" value="CAD-like"/>
</dbReference>
<dbReference type="InterPro" id="IPR011032">
    <property type="entry name" value="GroES-like_sf"/>
</dbReference>
<dbReference type="InterPro" id="IPR036291">
    <property type="entry name" value="NAD(P)-bd_dom_sf"/>
</dbReference>
<dbReference type="InterPro" id="IPR020843">
    <property type="entry name" value="PKS_ER"/>
</dbReference>
<dbReference type="PANTHER" id="PTHR42683">
    <property type="entry name" value="ALDEHYDE REDUCTASE"/>
    <property type="match status" value="1"/>
</dbReference>
<dbReference type="Pfam" id="PF08240">
    <property type="entry name" value="ADH_N"/>
    <property type="match status" value="1"/>
</dbReference>
<dbReference type="Pfam" id="PF00107">
    <property type="entry name" value="ADH_zinc_N"/>
    <property type="match status" value="1"/>
</dbReference>
<dbReference type="SMART" id="SM00829">
    <property type="entry name" value="PKS_ER"/>
    <property type="match status" value="1"/>
</dbReference>
<dbReference type="SUPFAM" id="SSF50129">
    <property type="entry name" value="GroES-like"/>
    <property type="match status" value="1"/>
</dbReference>
<dbReference type="SUPFAM" id="SSF51735">
    <property type="entry name" value="NAD(P)-binding Rossmann-fold domains"/>
    <property type="match status" value="1"/>
</dbReference>
<dbReference type="PROSITE" id="PS00059">
    <property type="entry name" value="ADH_ZINC"/>
    <property type="match status" value="1"/>
</dbReference>
<gene>
    <name evidence="5" type="primary">CAD2</name>
    <name type="synonym">CAD</name>
    <name evidence="6" type="synonym">GH2</name>
    <name type="ordered locus">Os02g0187800</name>
    <name type="ordered locus">LOC_Os02g09490</name>
    <name type="ORF">OJ1073_F05.31</name>
    <name type="ORF">OJ1145_F01.6</name>
</gene>
<accession>Q6ZHS4</accession>
<accession>A0A0N7KEU2</accession>
<accession>Q75W59</accession>
<comment type="function">
    <text evidence="3 4">Involved in lignin biosynthesis (PubMed:16443696, PubMed:21912859). Catalyzes the final step specific for the production of lignin monomers. Catalyzes the NADPH-dependent reduction of coniferaldehyde and sinapaldehyde to their respective alcohols (PubMed:16443696). Plays the major role in monolignol biosynthesis. Functions cooperatively with COMT in the culm internodes for the biosynthesis of monolignols, the lignin precursors. May be involved in lignin biosynthesis in leaves and roots (PubMed:21912859).</text>
</comment>
<comment type="catalytic activity">
    <reaction evidence="3">
        <text>(E)-cinnamyl alcohol + NADP(+) = (E)-cinnamaldehyde + NADPH + H(+)</text>
        <dbReference type="Rhea" id="RHEA:10392"/>
        <dbReference type="ChEBI" id="CHEBI:15378"/>
        <dbReference type="ChEBI" id="CHEBI:16731"/>
        <dbReference type="ChEBI" id="CHEBI:33227"/>
        <dbReference type="ChEBI" id="CHEBI:57783"/>
        <dbReference type="ChEBI" id="CHEBI:58349"/>
        <dbReference type="EC" id="1.1.1.195"/>
    </reaction>
    <physiologicalReaction direction="right-to-left" evidence="3">
        <dbReference type="Rhea" id="RHEA:10394"/>
    </physiologicalReaction>
</comment>
<comment type="catalytic activity">
    <reaction evidence="3">
        <text>(E)-coniferol + NADP(+) = (E)-coniferaldehyde + NADPH + H(+)</text>
        <dbReference type="Rhea" id="RHEA:22444"/>
        <dbReference type="ChEBI" id="CHEBI:15378"/>
        <dbReference type="ChEBI" id="CHEBI:16547"/>
        <dbReference type="ChEBI" id="CHEBI:17745"/>
        <dbReference type="ChEBI" id="CHEBI:57783"/>
        <dbReference type="ChEBI" id="CHEBI:58349"/>
        <dbReference type="EC" id="1.1.1.195"/>
    </reaction>
    <physiologicalReaction direction="right-to-left" evidence="3">
        <dbReference type="Rhea" id="RHEA:22446"/>
    </physiologicalReaction>
</comment>
<comment type="catalytic activity">
    <reaction evidence="3">
        <text>(E)-sinapyl alcohol + NADP(+) = (E)-sinapaldehyde + NADPH + H(+)</text>
        <dbReference type="Rhea" id="RHEA:45704"/>
        <dbReference type="ChEBI" id="CHEBI:15378"/>
        <dbReference type="ChEBI" id="CHEBI:27949"/>
        <dbReference type="ChEBI" id="CHEBI:57783"/>
        <dbReference type="ChEBI" id="CHEBI:58349"/>
        <dbReference type="ChEBI" id="CHEBI:64557"/>
        <dbReference type="EC" id="1.1.1.195"/>
    </reaction>
    <physiologicalReaction direction="right-to-left" evidence="3">
        <dbReference type="Rhea" id="RHEA:45706"/>
    </physiologicalReaction>
</comment>
<comment type="catalytic activity">
    <reaction evidence="3">
        <text>(E)-4-coumaroyl alcohol + NADP(+) = (E)-4-coumaraldehyde + NADPH + H(+)</text>
        <dbReference type="Rhea" id="RHEA:45724"/>
        <dbReference type="ChEBI" id="CHEBI:15378"/>
        <dbReference type="ChEBI" id="CHEBI:28353"/>
        <dbReference type="ChEBI" id="CHEBI:57783"/>
        <dbReference type="ChEBI" id="CHEBI:58349"/>
        <dbReference type="ChEBI" id="CHEBI:64555"/>
        <dbReference type="EC" id="1.1.1.195"/>
    </reaction>
    <physiologicalReaction direction="right-to-left" evidence="3">
        <dbReference type="Rhea" id="RHEA:45726"/>
    </physiologicalReaction>
</comment>
<comment type="catalytic activity">
    <reaction evidence="3">
        <text>(E)-caffeyl alcohol + NADP(+) = (E)-caffeyl aldehyde + NADPH + H(+)</text>
        <dbReference type="Rhea" id="RHEA:45728"/>
        <dbReference type="ChEBI" id="CHEBI:15378"/>
        <dbReference type="ChEBI" id="CHEBI:28323"/>
        <dbReference type="ChEBI" id="CHEBI:31334"/>
        <dbReference type="ChEBI" id="CHEBI:57783"/>
        <dbReference type="ChEBI" id="CHEBI:58349"/>
    </reaction>
    <physiologicalReaction direction="right-to-left" evidence="3">
        <dbReference type="Rhea" id="RHEA:45730"/>
    </physiologicalReaction>
</comment>
<comment type="cofactor">
    <cofactor evidence="1">
        <name>Zn(2+)</name>
        <dbReference type="ChEBI" id="CHEBI:29105"/>
    </cofactor>
    <text evidence="1">Binds 2 Zn(2+) ions per subunit.</text>
</comment>
<comment type="biophysicochemical properties">
    <kinetics>
        <KM evidence="3">4.4 uM for coniferaldehyde</KM>
        <KM evidence="3">20.8 uM for sinapaldehyde</KM>
        <Vmax evidence="3">32.9 pmol/sec/ug enzyme with coniferaldehyde as substrate</Vmax>
        <Vmax evidence="3">87.0 pmol/sec/ug enzyme with sinapaldehyde as substrate</Vmax>
    </kinetics>
</comment>
<comment type="pathway">
    <text evidence="3">Aromatic compound metabolism; phenylpropanoid biosynthesis.</text>
</comment>
<comment type="subunit">
    <text evidence="1">Homodimer.</text>
</comment>
<comment type="tissue specificity">
    <text evidence="2 3 4">Expressed in roots behind the root tips in the pericycle region and layer of cortical cells adjacent to the exodermis. Expressed in vascular bundles and lateral veins of leaf sheaths and blades. Expressed in the vicinity of vascular bundles in the first internode below the inflorescence (PubMed:15452707, PubMed:16443696). Highly expressed in the culm (PubMed:21912859).</text>
</comment>
<comment type="disruption phenotype">
    <text evidence="3">Reduced lignin content, reddish-brown coloration of panicles and internodes, and golden yellow seeds.</text>
</comment>
<comment type="similarity">
    <text evidence="7">Belongs to the zinc-containing alcohol dehydrogenase family.</text>
</comment>